<comment type="function">
    <text evidence="1 3 5 7">Essential cell division protein that may play a structural role. Probably involved in the regulation of the timing of cell division. Also required for sporulation.</text>
</comment>
<comment type="subunit">
    <text evidence="3 4 6 8">Monomer. Interacts with DivIB and DivIC. Interaction with DivIC stabilizes FtsL against RasP cleavage.</text>
</comment>
<comment type="interaction">
    <interactant intactId="EBI-5245735">
        <id>Q07867</id>
    </interactant>
    <interactant intactId="EBI-5243468">
        <id>P37471</id>
        <label>divIC</label>
    </interactant>
    <organismsDiffer>false</organismsDiffer>
    <experiments>4</experiments>
</comment>
<comment type="subcellular location">
    <subcellularLocation>
        <location evidence="1 2 3 4 6">Cell membrane</location>
        <topology evidence="1 2 3 4 6">Single-pass type II membrane protein</topology>
    </subcellularLocation>
    <text>Localizes to the division septum where it forms a ring structure. Remains localized at mid-cell during the whole septation process. Localization requires FtsZ, DivIB, DivIC and PBP-2B.</text>
</comment>
<comment type="induction">
    <text evidence="10">Transcribed at a low constant level in all growth phases. Part of the mraZ-rsmH-ftsL-pbpB operon.</text>
</comment>
<comment type="domain">
    <text evidence="7">The cytoplasmic region is involved in protein stability.</text>
</comment>
<comment type="PTM">
    <text>Cleaved by RasP. Cleavage is important for turnover and function of FtsL.</text>
</comment>
<comment type="disruption phenotype">
    <text evidence="9 10">Essential, it cannot be deleted.</text>
</comment>
<comment type="miscellaneous">
    <text>Is thermodynamically highly unstable and is likely to be rapidly degraded unless stabilized by interaction with other septasomal proteins.</text>
</comment>
<comment type="similarity">
    <text evidence="1">Belongs to the FtsL family.</text>
</comment>
<comment type="caution">
    <text evidence="12 13">The question of whether FtsL and DivIC interact directly (PubMed:16936019) or indirectly (PubMed:11994149) remains controversial.</text>
</comment>
<name>FTSL_BACSU</name>
<gene>
    <name evidence="1" type="primary">ftsL</name>
    <name evidence="11" type="synonym">yllD</name>
    <name type="synonym">ylxB</name>
    <name type="ordered locus">BSU15150</name>
</gene>
<feature type="chain" id="PRO_0000087367" description="Cell division protein FtsL">
    <location>
        <begin position="1"/>
        <end position="117"/>
    </location>
</feature>
<feature type="topological domain" description="Cytoplasmic" evidence="1">
    <location>
        <begin position="1"/>
        <end position="35"/>
    </location>
</feature>
<feature type="transmembrane region" description="Helical" evidence="1">
    <location>
        <begin position="36"/>
        <end position="56"/>
    </location>
</feature>
<feature type="topological domain" description="Extracellular" evidence="1">
    <location>
        <begin position="57"/>
        <end position="117"/>
    </location>
</feature>
<proteinExistence type="evidence at protein level"/>
<organism>
    <name type="scientific">Bacillus subtilis (strain 168)</name>
    <dbReference type="NCBI Taxonomy" id="224308"/>
    <lineage>
        <taxon>Bacteria</taxon>
        <taxon>Bacillati</taxon>
        <taxon>Bacillota</taxon>
        <taxon>Bacilli</taxon>
        <taxon>Bacillales</taxon>
        <taxon>Bacillaceae</taxon>
        <taxon>Bacillus</taxon>
    </lineage>
</organism>
<protein>
    <recommendedName>
        <fullName evidence="1">Cell division protein FtsL</fullName>
    </recommendedName>
</protein>
<keyword id="KW-0131">Cell cycle</keyword>
<keyword id="KW-0132">Cell division</keyword>
<keyword id="KW-1003">Cell membrane</keyword>
<keyword id="KW-0472">Membrane</keyword>
<keyword id="KW-1185">Reference proteome</keyword>
<keyword id="KW-0812">Transmembrane</keyword>
<keyword id="KW-1133">Transmembrane helix</keyword>
<accession>Q07867</accession>
<dbReference type="EMBL" id="L09703">
    <property type="protein sequence ID" value="AAC36836.1"/>
    <property type="molecule type" value="Unassigned_DNA"/>
</dbReference>
<dbReference type="EMBL" id="Z68230">
    <property type="protein sequence ID" value="CAA92526.1"/>
    <property type="molecule type" value="Genomic_DNA"/>
</dbReference>
<dbReference type="EMBL" id="AL009126">
    <property type="protein sequence ID" value="CAB13388.1"/>
    <property type="molecule type" value="Genomic_DNA"/>
</dbReference>
<dbReference type="PIR" id="B53292">
    <property type="entry name" value="B53292"/>
</dbReference>
<dbReference type="RefSeq" id="NP_389398.1">
    <property type="nucleotide sequence ID" value="NC_000964.3"/>
</dbReference>
<dbReference type="RefSeq" id="WP_003232200.1">
    <property type="nucleotide sequence ID" value="NZ_OZ025638.1"/>
</dbReference>
<dbReference type="SMR" id="Q07867"/>
<dbReference type="FunCoup" id="Q07867">
    <property type="interactions" value="21"/>
</dbReference>
<dbReference type="IntAct" id="Q07867">
    <property type="interactions" value="17"/>
</dbReference>
<dbReference type="STRING" id="224308.BSU15150"/>
<dbReference type="PaxDb" id="224308-BSU15150"/>
<dbReference type="EnsemblBacteria" id="CAB13388">
    <property type="protein sequence ID" value="CAB13388"/>
    <property type="gene ID" value="BSU_15150"/>
</dbReference>
<dbReference type="GeneID" id="50133630"/>
<dbReference type="GeneID" id="939860"/>
<dbReference type="KEGG" id="bsu:BSU15150"/>
<dbReference type="PATRIC" id="fig|224308.179.peg.1651"/>
<dbReference type="eggNOG" id="COG4839">
    <property type="taxonomic scope" value="Bacteria"/>
</dbReference>
<dbReference type="InParanoid" id="Q07867"/>
<dbReference type="OrthoDB" id="2870797at2"/>
<dbReference type="BioCyc" id="BSUB:BSU15150-MONOMER"/>
<dbReference type="Proteomes" id="UP000001570">
    <property type="component" value="Chromosome"/>
</dbReference>
<dbReference type="GO" id="GO:0032153">
    <property type="term" value="C:cell division site"/>
    <property type="evidence" value="ECO:0007669"/>
    <property type="project" value="UniProtKB-UniRule"/>
</dbReference>
<dbReference type="GO" id="GO:0005886">
    <property type="term" value="C:plasma membrane"/>
    <property type="evidence" value="ECO:0007669"/>
    <property type="project" value="UniProtKB-SubCell"/>
</dbReference>
<dbReference type="GO" id="GO:0043093">
    <property type="term" value="P:FtsZ-dependent cytokinesis"/>
    <property type="evidence" value="ECO:0007669"/>
    <property type="project" value="UniProtKB-UniRule"/>
</dbReference>
<dbReference type="HAMAP" id="MF_00910">
    <property type="entry name" value="FtsL"/>
    <property type="match status" value="1"/>
</dbReference>
<dbReference type="InterPro" id="IPR011922">
    <property type="entry name" value="Cell_div_FtsL"/>
</dbReference>
<dbReference type="NCBIfam" id="TIGR02209">
    <property type="entry name" value="ftsL_broad"/>
    <property type="match status" value="1"/>
</dbReference>
<evidence type="ECO:0000255" key="1">
    <source>
        <dbReference type="HAMAP-Rule" id="MF_00910"/>
    </source>
</evidence>
<evidence type="ECO:0000269" key="2">
    <source>
    </source>
</evidence>
<evidence type="ECO:0000269" key="3">
    <source>
    </source>
</evidence>
<evidence type="ECO:0000269" key="4">
    <source>
    </source>
</evidence>
<evidence type="ECO:0000269" key="5">
    <source>
    </source>
</evidence>
<evidence type="ECO:0000269" key="6">
    <source>
    </source>
</evidence>
<evidence type="ECO:0000269" key="7">
    <source>
    </source>
</evidence>
<evidence type="ECO:0000269" key="8">
    <source>
    </source>
</evidence>
<evidence type="ECO:0000269" key="9">
    <source>
    </source>
</evidence>
<evidence type="ECO:0000269" key="10">
    <source>
    </source>
</evidence>
<evidence type="ECO:0000303" key="11">
    <source>
    </source>
</evidence>
<evidence type="ECO:0000305" key="12">
    <source>
    </source>
</evidence>
<evidence type="ECO:0000305" key="13">
    <source>
    </source>
</evidence>
<reference key="1">
    <citation type="journal article" date="1993" name="J. Bacteriol.">
        <title>Cloning and sequencing of the cell division gene pbpB, which encodes penicillin-binding protein 2B in Bacillus subtilis.</title>
        <authorList>
            <person name="Yanouri A."/>
            <person name="Daniel R.A."/>
            <person name="Errington J."/>
            <person name="Buchanan C.E."/>
        </authorList>
    </citation>
    <scope>NUCLEOTIDE SEQUENCE [GENOMIC DNA]</scope>
    <scope>DISRUPTION PHENOTYPE</scope>
    <source>
        <strain>168</strain>
    </source>
</reference>
<reference key="2">
    <citation type="journal article" date="1996" name="J. Bacteriol.">
        <title>A complex four-gene operon containing essential cell division gene pbpB in Bacillus subtilis.</title>
        <authorList>
            <person name="Daniel R.A."/>
            <person name="Williams A.M."/>
            <person name="Errington J."/>
        </authorList>
    </citation>
    <scope>NUCLEOTIDE SEQUENCE [GENOMIC DNA]</scope>
    <scope>INDUCTION</scope>
    <scope>DISRUPTION PHENOTYPE</scope>
    <source>
        <strain>168</strain>
    </source>
</reference>
<reference key="3">
    <citation type="journal article" date="1997" name="Nature">
        <title>The complete genome sequence of the Gram-positive bacterium Bacillus subtilis.</title>
        <authorList>
            <person name="Kunst F."/>
            <person name="Ogasawara N."/>
            <person name="Moszer I."/>
            <person name="Albertini A.M."/>
            <person name="Alloni G."/>
            <person name="Azevedo V."/>
            <person name="Bertero M.G."/>
            <person name="Bessieres P."/>
            <person name="Bolotin A."/>
            <person name="Borchert S."/>
            <person name="Borriss R."/>
            <person name="Boursier L."/>
            <person name="Brans A."/>
            <person name="Braun M."/>
            <person name="Brignell S.C."/>
            <person name="Bron S."/>
            <person name="Brouillet S."/>
            <person name="Bruschi C.V."/>
            <person name="Caldwell B."/>
            <person name="Capuano V."/>
            <person name="Carter N.M."/>
            <person name="Choi S.-K."/>
            <person name="Codani J.-J."/>
            <person name="Connerton I.F."/>
            <person name="Cummings N.J."/>
            <person name="Daniel R.A."/>
            <person name="Denizot F."/>
            <person name="Devine K.M."/>
            <person name="Duesterhoeft A."/>
            <person name="Ehrlich S.D."/>
            <person name="Emmerson P.T."/>
            <person name="Entian K.-D."/>
            <person name="Errington J."/>
            <person name="Fabret C."/>
            <person name="Ferrari E."/>
            <person name="Foulger D."/>
            <person name="Fritz C."/>
            <person name="Fujita M."/>
            <person name="Fujita Y."/>
            <person name="Fuma S."/>
            <person name="Galizzi A."/>
            <person name="Galleron N."/>
            <person name="Ghim S.-Y."/>
            <person name="Glaser P."/>
            <person name="Goffeau A."/>
            <person name="Golightly E.J."/>
            <person name="Grandi G."/>
            <person name="Guiseppi G."/>
            <person name="Guy B.J."/>
            <person name="Haga K."/>
            <person name="Haiech J."/>
            <person name="Harwood C.R."/>
            <person name="Henaut A."/>
            <person name="Hilbert H."/>
            <person name="Holsappel S."/>
            <person name="Hosono S."/>
            <person name="Hullo M.-F."/>
            <person name="Itaya M."/>
            <person name="Jones L.-M."/>
            <person name="Joris B."/>
            <person name="Karamata D."/>
            <person name="Kasahara Y."/>
            <person name="Klaerr-Blanchard M."/>
            <person name="Klein C."/>
            <person name="Kobayashi Y."/>
            <person name="Koetter P."/>
            <person name="Koningstein G."/>
            <person name="Krogh S."/>
            <person name="Kumano M."/>
            <person name="Kurita K."/>
            <person name="Lapidus A."/>
            <person name="Lardinois S."/>
            <person name="Lauber J."/>
            <person name="Lazarevic V."/>
            <person name="Lee S.-M."/>
            <person name="Levine A."/>
            <person name="Liu H."/>
            <person name="Masuda S."/>
            <person name="Mauel C."/>
            <person name="Medigue C."/>
            <person name="Medina N."/>
            <person name="Mellado R.P."/>
            <person name="Mizuno M."/>
            <person name="Moestl D."/>
            <person name="Nakai S."/>
            <person name="Noback M."/>
            <person name="Noone D."/>
            <person name="O'Reilly M."/>
            <person name="Ogawa K."/>
            <person name="Ogiwara A."/>
            <person name="Oudega B."/>
            <person name="Park S.-H."/>
            <person name="Parro V."/>
            <person name="Pohl T.M."/>
            <person name="Portetelle D."/>
            <person name="Porwollik S."/>
            <person name="Prescott A.M."/>
            <person name="Presecan E."/>
            <person name="Pujic P."/>
            <person name="Purnelle B."/>
            <person name="Rapoport G."/>
            <person name="Rey M."/>
            <person name="Reynolds S."/>
            <person name="Rieger M."/>
            <person name="Rivolta C."/>
            <person name="Rocha E."/>
            <person name="Roche B."/>
            <person name="Rose M."/>
            <person name="Sadaie Y."/>
            <person name="Sato T."/>
            <person name="Scanlan E."/>
            <person name="Schleich S."/>
            <person name="Schroeter R."/>
            <person name="Scoffone F."/>
            <person name="Sekiguchi J."/>
            <person name="Sekowska A."/>
            <person name="Seror S.J."/>
            <person name="Serror P."/>
            <person name="Shin B.-S."/>
            <person name="Soldo B."/>
            <person name="Sorokin A."/>
            <person name="Tacconi E."/>
            <person name="Takagi T."/>
            <person name="Takahashi H."/>
            <person name="Takemaru K."/>
            <person name="Takeuchi M."/>
            <person name="Tamakoshi A."/>
            <person name="Tanaka T."/>
            <person name="Terpstra P."/>
            <person name="Tognoni A."/>
            <person name="Tosato V."/>
            <person name="Uchiyama S."/>
            <person name="Vandenbol M."/>
            <person name="Vannier F."/>
            <person name="Vassarotti A."/>
            <person name="Viari A."/>
            <person name="Wambutt R."/>
            <person name="Wedler E."/>
            <person name="Wedler H."/>
            <person name="Weitzenegger T."/>
            <person name="Winters P."/>
            <person name="Wipat A."/>
            <person name="Yamamoto H."/>
            <person name="Yamane K."/>
            <person name="Yasumoto K."/>
            <person name="Yata K."/>
            <person name="Yoshida K."/>
            <person name="Yoshikawa H.-F."/>
            <person name="Zumstein E."/>
            <person name="Yoshikawa H."/>
            <person name="Danchin A."/>
        </authorList>
    </citation>
    <scope>NUCLEOTIDE SEQUENCE [LARGE SCALE GENOMIC DNA]</scope>
    <source>
        <strain>168</strain>
    </source>
</reference>
<reference key="4">
    <citation type="journal article" date="2000" name="Mol. Microbiol.">
        <title>Intrinsic instability of the essential cell division protein FtsL of Bacillus subtilis and a role for DivIB protein in FtsL turnover.</title>
        <authorList>
            <person name="Daniel R.A."/>
            <person name="Errington J."/>
        </authorList>
    </citation>
    <scope>SUBCELLULAR LOCATION</scope>
    <source>
        <strain>168</strain>
    </source>
</reference>
<reference key="5">
    <citation type="journal article" date="2000" name="Mol. Microbiol.">
        <title>The Bacillus subtilis cell division protein FtsL localizes to sites of septation and interacts with DivIC.</title>
        <authorList>
            <person name="Sievers J."/>
            <person name="Errington J."/>
        </authorList>
    </citation>
    <scope>FUNCTION</scope>
    <scope>SUBUNIT</scope>
    <scope>SUBCELLULAR LOCATION</scope>
    <source>
        <strain>168</strain>
    </source>
</reference>
<reference key="6">
    <citation type="journal article" date="2002" name="Mol. Microbiol.">
        <title>The Bacillus subtilis cell division proteins FtsL and DivIC are intrinsically unstable and do not interact with one another in the absence of other septasomal components.</title>
        <authorList>
            <person name="Robson S.A."/>
            <person name="Michie K.A."/>
            <person name="Mackay J.P."/>
            <person name="Harry E."/>
            <person name="King G.F."/>
        </authorList>
    </citation>
    <scope>SUBUNIT</scope>
    <scope>SUBCELLULAR LOCATION</scope>
    <scope>THERMODYNAMIC INSTABILITY</scope>
</reference>
<reference key="7">
    <citation type="journal article" date="2006" name="J. Bacteriol.">
        <title>Multiple interactions between the transmembrane division proteins of Bacillus subtilis and the role of FtsL instability in divisome assembly.</title>
        <authorList>
            <person name="Daniel R.A."/>
            <person name="Noirot-Gros M.F."/>
            <person name="Noirot P."/>
            <person name="Errington J."/>
        </authorList>
    </citation>
    <scope>INTERACTION WITH DIVIB AND DIVIC</scope>
    <scope>SUBUNIT</scope>
    <scope>SUBCELLULAR LOCATION</scope>
    <scope>THERMODYNAMIC INSTABILITY</scope>
    <source>
        <strain>168</strain>
    </source>
</reference>
<reference key="8">
    <citation type="journal article" date="2006" name="Microbiology">
        <title>Bacillus subtilis EzrA and FtsL synergistically regulate FtsZ ring dynamics during cell division.</title>
        <authorList>
            <person name="Kawai Y."/>
            <person name="Ogasawara N."/>
        </authorList>
    </citation>
    <scope>FUNCTION</scope>
    <source>
        <strain>CRK6000</strain>
    </source>
</reference>
<reference key="9">
    <citation type="journal article" date="2006" name="Mol. Microbiol.">
        <title>Regulated intramembrane proteolysis of FtsL protein and the control of cell division in Bacillus subtilis.</title>
        <authorList>
            <person name="Bramkamp M."/>
            <person name="Weston L."/>
            <person name="Daniel R.A."/>
            <person name="Errington J."/>
        </authorList>
    </citation>
    <scope>FUNCTION</scope>
    <scope>DOMAIN</scope>
    <scope>CLEAVAGE</scope>
</reference>
<reference key="10">
    <citation type="journal article" date="2010" name="J. Bacteriol.">
        <title>DivIC stabilizes FtsL against RasP cleavage.</title>
        <authorList>
            <person name="Wadenpohl I."/>
            <person name="Bramkamp M."/>
        </authorList>
    </citation>
    <scope>INTERACTION WITH DIVIC</scope>
    <source>
        <strain>168</strain>
    </source>
</reference>
<sequence length="117" mass="13073">MSNLAYQPEKQQRHAISPEKKVIVKKRASITLGEKVLLVLFAAAVLSVSLLIVSKAYAAYQTNIEVQKLEEQISSENKQIGDLEKSVADLSKPQRIMDIAKKNGLNLKDKKVKNIQE</sequence>